<gene>
    <name evidence="1" type="primary">ileS</name>
    <name type="ordered locus">Fphi_0396</name>
</gene>
<comment type="function">
    <text evidence="1">Catalyzes the attachment of isoleucine to tRNA(Ile). As IleRS can inadvertently accommodate and process structurally similar amino acids such as valine, to avoid such errors it has two additional distinct tRNA(Ile)-dependent editing activities. One activity is designated as 'pretransfer' editing and involves the hydrolysis of activated Val-AMP. The other activity is designated 'posttransfer' editing and involves deacylation of mischarged Val-tRNA(Ile).</text>
</comment>
<comment type="catalytic activity">
    <reaction evidence="1">
        <text>tRNA(Ile) + L-isoleucine + ATP = L-isoleucyl-tRNA(Ile) + AMP + diphosphate</text>
        <dbReference type="Rhea" id="RHEA:11060"/>
        <dbReference type="Rhea" id="RHEA-COMP:9666"/>
        <dbReference type="Rhea" id="RHEA-COMP:9695"/>
        <dbReference type="ChEBI" id="CHEBI:30616"/>
        <dbReference type="ChEBI" id="CHEBI:33019"/>
        <dbReference type="ChEBI" id="CHEBI:58045"/>
        <dbReference type="ChEBI" id="CHEBI:78442"/>
        <dbReference type="ChEBI" id="CHEBI:78528"/>
        <dbReference type="ChEBI" id="CHEBI:456215"/>
        <dbReference type="EC" id="6.1.1.5"/>
    </reaction>
</comment>
<comment type="cofactor">
    <cofactor evidence="1">
        <name>Zn(2+)</name>
        <dbReference type="ChEBI" id="CHEBI:29105"/>
    </cofactor>
    <text evidence="1">Binds 1 zinc ion per subunit.</text>
</comment>
<comment type="subunit">
    <text evidence="1">Monomer.</text>
</comment>
<comment type="subcellular location">
    <subcellularLocation>
        <location evidence="1">Cytoplasm</location>
    </subcellularLocation>
</comment>
<comment type="domain">
    <text evidence="1">IleRS has two distinct active sites: one for aminoacylation and one for editing. The misactivated valine is translocated from the active site to the editing site, which sterically excludes the correctly activated isoleucine. The single editing site contains two valyl binding pockets, one specific for each substrate (Val-AMP or Val-tRNA(Ile)).</text>
</comment>
<comment type="similarity">
    <text evidence="1">Belongs to the class-I aminoacyl-tRNA synthetase family. IleS type 1 subfamily.</text>
</comment>
<accession>B0TZQ5</accession>
<reference key="1">
    <citation type="submission" date="2007-12" db="EMBL/GenBank/DDBJ databases">
        <title>Complete sequence of chromosome of Francisella philomiragia subsp. philomiragia ATCC 25017.</title>
        <authorList>
            <consortium name="US DOE Joint Genome Institute"/>
            <person name="Copeland A."/>
            <person name="Lucas S."/>
            <person name="Lapidus A."/>
            <person name="Barry K."/>
            <person name="Detter J.C."/>
            <person name="Glavina del Rio T."/>
            <person name="Hammon N."/>
            <person name="Israni S."/>
            <person name="Dalin E."/>
            <person name="Tice H."/>
            <person name="Pitluck S."/>
            <person name="Chain P."/>
            <person name="Malfatti S."/>
            <person name="Shin M."/>
            <person name="Vergez L."/>
            <person name="Schmutz J."/>
            <person name="Larimer F."/>
            <person name="Land M."/>
            <person name="Hauser L."/>
            <person name="Richardson P."/>
        </authorList>
    </citation>
    <scope>NUCLEOTIDE SEQUENCE [LARGE SCALE GENOMIC DNA]</scope>
    <source>
        <strain>ATCC 25017 / CCUG 19701 / FSC 153 / O#319-036</strain>
    </source>
</reference>
<organism>
    <name type="scientific">Francisella philomiragia subsp. philomiragia (strain ATCC 25017 / CCUG 19701 / FSC 153 / O#319-036)</name>
    <dbReference type="NCBI Taxonomy" id="484022"/>
    <lineage>
        <taxon>Bacteria</taxon>
        <taxon>Pseudomonadati</taxon>
        <taxon>Pseudomonadota</taxon>
        <taxon>Gammaproteobacteria</taxon>
        <taxon>Thiotrichales</taxon>
        <taxon>Francisellaceae</taxon>
        <taxon>Francisella</taxon>
    </lineage>
</organism>
<keyword id="KW-0030">Aminoacyl-tRNA synthetase</keyword>
<keyword id="KW-0067">ATP-binding</keyword>
<keyword id="KW-0963">Cytoplasm</keyword>
<keyword id="KW-0436">Ligase</keyword>
<keyword id="KW-0479">Metal-binding</keyword>
<keyword id="KW-0547">Nucleotide-binding</keyword>
<keyword id="KW-0648">Protein biosynthesis</keyword>
<keyword id="KW-0862">Zinc</keyword>
<dbReference type="EC" id="6.1.1.5" evidence="1"/>
<dbReference type="EMBL" id="CP000937">
    <property type="protein sequence ID" value="ABZ86614.1"/>
    <property type="molecule type" value="Genomic_DNA"/>
</dbReference>
<dbReference type="SMR" id="B0TZQ5"/>
<dbReference type="KEGG" id="fph:Fphi_0396"/>
<dbReference type="eggNOG" id="COG0060">
    <property type="taxonomic scope" value="Bacteria"/>
</dbReference>
<dbReference type="HOGENOM" id="CLU_001493_7_0_6"/>
<dbReference type="GO" id="GO:0005829">
    <property type="term" value="C:cytosol"/>
    <property type="evidence" value="ECO:0007669"/>
    <property type="project" value="TreeGrafter"/>
</dbReference>
<dbReference type="GO" id="GO:0002161">
    <property type="term" value="F:aminoacyl-tRNA deacylase activity"/>
    <property type="evidence" value="ECO:0007669"/>
    <property type="project" value="InterPro"/>
</dbReference>
<dbReference type="GO" id="GO:0005524">
    <property type="term" value="F:ATP binding"/>
    <property type="evidence" value="ECO:0007669"/>
    <property type="project" value="UniProtKB-UniRule"/>
</dbReference>
<dbReference type="GO" id="GO:0004822">
    <property type="term" value="F:isoleucine-tRNA ligase activity"/>
    <property type="evidence" value="ECO:0007669"/>
    <property type="project" value="UniProtKB-UniRule"/>
</dbReference>
<dbReference type="GO" id="GO:0000049">
    <property type="term" value="F:tRNA binding"/>
    <property type="evidence" value="ECO:0007669"/>
    <property type="project" value="InterPro"/>
</dbReference>
<dbReference type="GO" id="GO:0008270">
    <property type="term" value="F:zinc ion binding"/>
    <property type="evidence" value="ECO:0007669"/>
    <property type="project" value="UniProtKB-UniRule"/>
</dbReference>
<dbReference type="GO" id="GO:0006428">
    <property type="term" value="P:isoleucyl-tRNA aminoacylation"/>
    <property type="evidence" value="ECO:0007669"/>
    <property type="project" value="UniProtKB-UniRule"/>
</dbReference>
<dbReference type="CDD" id="cd07960">
    <property type="entry name" value="Anticodon_Ia_Ile_BEm"/>
    <property type="match status" value="1"/>
</dbReference>
<dbReference type="CDD" id="cd00818">
    <property type="entry name" value="IleRS_core"/>
    <property type="match status" value="1"/>
</dbReference>
<dbReference type="FunFam" id="1.10.730.20:FF:000001">
    <property type="entry name" value="Isoleucine--tRNA ligase"/>
    <property type="match status" value="1"/>
</dbReference>
<dbReference type="FunFam" id="3.40.50.620:FF:000042">
    <property type="entry name" value="Isoleucine--tRNA ligase"/>
    <property type="match status" value="1"/>
</dbReference>
<dbReference type="FunFam" id="3.40.50.620:FF:000048">
    <property type="entry name" value="Isoleucine--tRNA ligase"/>
    <property type="match status" value="1"/>
</dbReference>
<dbReference type="Gene3D" id="1.10.730.20">
    <property type="match status" value="1"/>
</dbReference>
<dbReference type="Gene3D" id="3.40.50.620">
    <property type="entry name" value="HUPs"/>
    <property type="match status" value="2"/>
</dbReference>
<dbReference type="Gene3D" id="3.90.740.10">
    <property type="entry name" value="Valyl/Leucyl/Isoleucyl-tRNA synthetase, editing domain"/>
    <property type="match status" value="1"/>
</dbReference>
<dbReference type="HAMAP" id="MF_02002">
    <property type="entry name" value="Ile_tRNA_synth_type1"/>
    <property type="match status" value="1"/>
</dbReference>
<dbReference type="InterPro" id="IPR001412">
    <property type="entry name" value="aa-tRNA-synth_I_CS"/>
</dbReference>
<dbReference type="InterPro" id="IPR002300">
    <property type="entry name" value="aa-tRNA-synth_Ia"/>
</dbReference>
<dbReference type="InterPro" id="IPR033708">
    <property type="entry name" value="Anticodon_Ile_BEm"/>
</dbReference>
<dbReference type="InterPro" id="IPR002301">
    <property type="entry name" value="Ile-tRNA-ligase"/>
</dbReference>
<dbReference type="InterPro" id="IPR023585">
    <property type="entry name" value="Ile-tRNA-ligase_type1"/>
</dbReference>
<dbReference type="InterPro" id="IPR050081">
    <property type="entry name" value="Ile-tRNA_ligase"/>
</dbReference>
<dbReference type="InterPro" id="IPR013155">
    <property type="entry name" value="M/V/L/I-tRNA-synth_anticd-bd"/>
</dbReference>
<dbReference type="InterPro" id="IPR014729">
    <property type="entry name" value="Rossmann-like_a/b/a_fold"/>
</dbReference>
<dbReference type="InterPro" id="IPR009080">
    <property type="entry name" value="tRNAsynth_Ia_anticodon-bd"/>
</dbReference>
<dbReference type="InterPro" id="IPR009008">
    <property type="entry name" value="Val/Leu/Ile-tRNA-synth_edit"/>
</dbReference>
<dbReference type="InterPro" id="IPR010663">
    <property type="entry name" value="Znf_FPG/IleRS"/>
</dbReference>
<dbReference type="NCBIfam" id="TIGR00392">
    <property type="entry name" value="ileS"/>
    <property type="match status" value="1"/>
</dbReference>
<dbReference type="PANTHER" id="PTHR42765:SF1">
    <property type="entry name" value="ISOLEUCINE--TRNA LIGASE, MITOCHONDRIAL"/>
    <property type="match status" value="1"/>
</dbReference>
<dbReference type="PANTHER" id="PTHR42765">
    <property type="entry name" value="SOLEUCYL-TRNA SYNTHETASE"/>
    <property type="match status" value="1"/>
</dbReference>
<dbReference type="Pfam" id="PF08264">
    <property type="entry name" value="Anticodon_1"/>
    <property type="match status" value="1"/>
</dbReference>
<dbReference type="Pfam" id="PF00133">
    <property type="entry name" value="tRNA-synt_1"/>
    <property type="match status" value="1"/>
</dbReference>
<dbReference type="Pfam" id="PF06827">
    <property type="entry name" value="zf-FPG_IleRS"/>
    <property type="match status" value="1"/>
</dbReference>
<dbReference type="PRINTS" id="PR00984">
    <property type="entry name" value="TRNASYNTHILE"/>
</dbReference>
<dbReference type="SUPFAM" id="SSF47323">
    <property type="entry name" value="Anticodon-binding domain of a subclass of class I aminoacyl-tRNA synthetases"/>
    <property type="match status" value="1"/>
</dbReference>
<dbReference type="SUPFAM" id="SSF52374">
    <property type="entry name" value="Nucleotidylyl transferase"/>
    <property type="match status" value="1"/>
</dbReference>
<dbReference type="SUPFAM" id="SSF50677">
    <property type="entry name" value="ValRS/IleRS/LeuRS editing domain"/>
    <property type="match status" value="1"/>
</dbReference>
<dbReference type="PROSITE" id="PS00178">
    <property type="entry name" value="AA_TRNA_LIGASE_I"/>
    <property type="match status" value="1"/>
</dbReference>
<feature type="chain" id="PRO_1000088546" description="Isoleucine--tRNA ligase">
    <location>
        <begin position="1"/>
        <end position="935"/>
    </location>
</feature>
<feature type="short sequence motif" description="'HIGH' region">
    <location>
        <begin position="58"/>
        <end position="68"/>
    </location>
</feature>
<feature type="short sequence motif" description="'KMSKS' region">
    <location>
        <begin position="599"/>
        <end position="603"/>
    </location>
</feature>
<feature type="binding site" evidence="1">
    <location>
        <position position="558"/>
    </location>
    <ligand>
        <name>L-isoleucyl-5'-AMP</name>
        <dbReference type="ChEBI" id="CHEBI:178002"/>
    </ligand>
</feature>
<feature type="binding site" evidence="1">
    <location>
        <position position="602"/>
    </location>
    <ligand>
        <name>ATP</name>
        <dbReference type="ChEBI" id="CHEBI:30616"/>
    </ligand>
</feature>
<feature type="binding site" evidence="1">
    <location>
        <position position="897"/>
    </location>
    <ligand>
        <name>Zn(2+)</name>
        <dbReference type="ChEBI" id="CHEBI:29105"/>
    </ligand>
</feature>
<feature type="binding site" evidence="1">
    <location>
        <position position="900"/>
    </location>
    <ligand>
        <name>Zn(2+)</name>
        <dbReference type="ChEBI" id="CHEBI:29105"/>
    </ligand>
</feature>
<feature type="binding site" evidence="1">
    <location>
        <position position="917"/>
    </location>
    <ligand>
        <name>Zn(2+)</name>
        <dbReference type="ChEBI" id="CHEBI:29105"/>
    </ligand>
</feature>
<feature type="binding site" evidence="1">
    <location>
        <position position="920"/>
    </location>
    <ligand>
        <name>Zn(2+)</name>
        <dbReference type="ChEBI" id="CHEBI:29105"/>
    </ligand>
</feature>
<proteinExistence type="inferred from homology"/>
<name>SYI_FRAP2</name>
<sequence length="935" mass="107504">MSDYKDTLNLPKTSFSMKGNLANKEPMILNKWEKQGIYKKIREHFAGREKFVLHDGPPYANGSIHVGHAVNKILKDIIVKSKTLSGYDAPYIPTWDCHGLPIELQVEKKHGKAGQKISEDAFRKECRKYAKQQVEIQKKDFKRLGVLGQWDQPYLTMDFSYEANMIRTLAKIIENKHLTKGFKPVHWCTDCGSALAEAEVEYKDKISPAIDVKFKIKDKEKLAKAFGLESLNHDAFAIIWTTTPWTLPANQAIAVNNQLNYSLVKIEDFYIILAENLVEQTLKRYAIENAQVIANTSGYKLIGIIAEHPFYSRHVPILHGDHVTDDSGTGMVHTAPTHGVEDFTLGKEHDLSMEIFVKGNGCYSENTKLFAGEFVFKANDRVIELLGEKKRLMNFDKLKHSYPHCWRHKTPLIFRATPQWFISMEKEGLREKAIEAIKETSWAPSWGQARIEGMIKDRPDWCISRQRTWGVPLPLFIHKETEELHPNTIEILHKVAQKIEKGGIEAWFNADDNEFIAETDKYKRVKDTLDVWFDSGSSSMCILDIDKSLSYPADLYLEGSDQHRGWFQTSLLVAMSAKGNQPYKEVFTHGFVVDEHGRKMSKSLGNVTSPQDIYNTLGADILRLWTASTDYKSEMAVSDQILKRTADTYRRLRNTARFLLSNLEGFNPETDIIEFDKLVKLDQWAIAKTKEFQDKIIEAYDKYQTHTVAQLIHHFCSIEMGSFYLDIIKDRQYTAKADGHPRKSAQTAIYHIVHALVRWMAPILSYTADEIWEATPKTTDLPIQLCEWYTDLKSFNDQDELNLEFWAKIQEIRSEVNRILEIKRNEEVIKASLEAEIIIYADNDNYKLLEKLGNELRFLLISSKASLRAIEEKTNNSIESNITGLNIEVNKIEEPKCERCWHRSATVGQNEEYQDICSRCVENITTEAGESREFA</sequence>
<evidence type="ECO:0000255" key="1">
    <source>
        <dbReference type="HAMAP-Rule" id="MF_02002"/>
    </source>
</evidence>
<protein>
    <recommendedName>
        <fullName evidence="1">Isoleucine--tRNA ligase</fullName>
        <ecNumber evidence="1">6.1.1.5</ecNumber>
    </recommendedName>
    <alternativeName>
        <fullName evidence="1">Isoleucyl-tRNA synthetase</fullName>
        <shortName evidence="1">IleRS</shortName>
    </alternativeName>
</protein>